<dbReference type="EMBL" id="BC056523">
    <property type="protein sequence ID" value="AAH56523.2"/>
    <property type="molecule type" value="mRNA"/>
</dbReference>
<dbReference type="EMBL" id="BC066393">
    <property type="protein sequence ID" value="AAH66393.1"/>
    <property type="molecule type" value="mRNA"/>
</dbReference>
<dbReference type="RefSeq" id="NP_996940.1">
    <molecule id="Q6NZ07-1"/>
    <property type="nucleotide sequence ID" value="NM_207057.1"/>
</dbReference>
<dbReference type="RefSeq" id="XP_005161646.1">
    <molecule id="Q6NZ07-2"/>
    <property type="nucleotide sequence ID" value="XM_005161589.5"/>
</dbReference>
<dbReference type="SMR" id="Q6NZ07"/>
<dbReference type="FunCoup" id="Q6NZ07">
    <property type="interactions" value="2012"/>
</dbReference>
<dbReference type="STRING" id="7955.ENSDARP00000076240"/>
<dbReference type="GlyCosmos" id="Q6NZ07">
    <property type="glycosylation" value="3 sites, No reported glycans"/>
</dbReference>
<dbReference type="PaxDb" id="7955-ENSDARP00000076240"/>
<dbReference type="Ensembl" id="ENSDART00000081801">
    <molecule id="Q6NZ07-1"/>
    <property type="protein sequence ID" value="ENSDARP00000076240"/>
    <property type="gene ID" value="ENSDARG00000058861"/>
</dbReference>
<dbReference type="GeneID" id="336844"/>
<dbReference type="KEGG" id="dre:336844"/>
<dbReference type="AGR" id="ZFIN:ZDB-GENE-030131-8788"/>
<dbReference type="CTD" id="56926"/>
<dbReference type="ZFIN" id="ZDB-GENE-030131-8788">
    <property type="gene designation" value="ncln"/>
</dbReference>
<dbReference type="eggNOG" id="KOG2526">
    <property type="taxonomic scope" value="Eukaryota"/>
</dbReference>
<dbReference type="HOGENOM" id="CLU_034102_2_0_1"/>
<dbReference type="InParanoid" id="Q6NZ07"/>
<dbReference type="OMA" id="WSTSRHC"/>
<dbReference type="OrthoDB" id="5913609at2759"/>
<dbReference type="PhylomeDB" id="Q6NZ07"/>
<dbReference type="TreeFam" id="TF105849"/>
<dbReference type="PRO" id="PR:Q6NZ07"/>
<dbReference type="Proteomes" id="UP000000437">
    <property type="component" value="Chromosome 22"/>
</dbReference>
<dbReference type="Bgee" id="ENSDARG00000058861">
    <property type="expression patterns" value="Expressed in testis and 27 other cell types or tissues"/>
</dbReference>
<dbReference type="GO" id="GO:0005789">
    <property type="term" value="C:endoplasmic reticulum membrane"/>
    <property type="evidence" value="ECO:0000314"/>
    <property type="project" value="BHF-UCL"/>
</dbReference>
<dbReference type="GO" id="GO:0160064">
    <property type="term" value="C:multi-pass translocon complex"/>
    <property type="evidence" value="ECO:0000250"/>
    <property type="project" value="UniProtKB"/>
</dbReference>
<dbReference type="GO" id="GO:0043022">
    <property type="term" value="F:ribosome binding"/>
    <property type="evidence" value="ECO:0000250"/>
    <property type="project" value="UniProtKB"/>
</dbReference>
<dbReference type="GO" id="GO:0003140">
    <property type="term" value="P:determination of left/right asymmetry in lateral mesoderm"/>
    <property type="evidence" value="ECO:0000315"/>
    <property type="project" value="BHF-UCL"/>
</dbReference>
<dbReference type="GO" id="GO:0048484">
    <property type="term" value="P:enteric nervous system development"/>
    <property type="evidence" value="ECO:0000315"/>
    <property type="project" value="ZFIN"/>
</dbReference>
<dbReference type="GO" id="GO:0160063">
    <property type="term" value="P:multi-pass transmembrane protein insertion into ER membrane"/>
    <property type="evidence" value="ECO:0000250"/>
    <property type="project" value="UniProtKB"/>
</dbReference>
<dbReference type="GO" id="GO:1900108">
    <property type="term" value="P:negative regulation of nodal signaling pathway"/>
    <property type="evidence" value="ECO:0000315"/>
    <property type="project" value="BHF-UCL"/>
</dbReference>
<dbReference type="GO" id="GO:0009966">
    <property type="term" value="P:regulation of signal transduction"/>
    <property type="evidence" value="ECO:0000314"/>
    <property type="project" value="ZFIN"/>
</dbReference>
<dbReference type="CDD" id="cd03882">
    <property type="entry name" value="M28_nicalin_like"/>
    <property type="match status" value="1"/>
</dbReference>
<dbReference type="FunFam" id="3.40.630.10:FF:000021">
    <property type="entry name" value="Nicalin"/>
    <property type="match status" value="1"/>
</dbReference>
<dbReference type="Gene3D" id="3.40.630.10">
    <property type="entry name" value="Zn peptidases"/>
    <property type="match status" value="1"/>
</dbReference>
<dbReference type="InterPro" id="IPR016574">
    <property type="entry name" value="Nicalin"/>
</dbReference>
<dbReference type="InterPro" id="IPR007484">
    <property type="entry name" value="Peptidase_M28"/>
</dbReference>
<dbReference type="PANTHER" id="PTHR31826">
    <property type="entry name" value="NICALIN"/>
    <property type="match status" value="1"/>
</dbReference>
<dbReference type="Pfam" id="PF04389">
    <property type="entry name" value="Peptidase_M28"/>
    <property type="match status" value="1"/>
</dbReference>
<dbReference type="PIRSF" id="PIRSF011018">
    <property type="entry name" value="Nicalin"/>
    <property type="match status" value="1"/>
</dbReference>
<dbReference type="SUPFAM" id="SSF53187">
    <property type="entry name" value="Zn-dependent exopeptidases"/>
    <property type="match status" value="1"/>
</dbReference>
<proteinExistence type="evidence at transcript level"/>
<sequence length="572" mass="63988">MFEEAGEVLENMLKVSFPLSLVLFLVLVCPLRAEAAHEFSVYRMQQYDLQGQTYGSRNAILNTEARTVEAEVLSRRCVMMRLADFSYEKYQKALRQSAGAVVIILPHNMSTLPQDIVQQFMELEPELLATETIVPVYFALEDEELLSIYTQTQISSSSQGSSSAAEVLLHTATANGFQMVTSGAQSKAVSDWAITSLEGRLTGSGGEDLPTIVLVAHYDSFGVAPWLSYGADSNGSGVAILLELARLFSRLYSYKRTHAGYNLLFFLSGGGKFNYQGTKRWLEDNLDHTDASLLQDNVAFVLCLDTLGNSDNLHLHVSKPPKEGSPQYTLLKELETVVAHQHPDLKFAMVHKKINLADDTLAWEHERFGIRRLPAFTLSHLESHRSPARHSIMDMRSVSPSLEGAGEATTGPHVDLGKLSRNTKVIAETLARVIYNLTEKGVTGDLEIFTEQMQVQEDQLASLVDWLTAQPRAAQLLDKDSSIINTLEHQLSRYLKDVKRHLVRADKRDPEFVFYDQLKQTMNAYRVKPAIFDLLLAVCIASYLGVLYLAIQNFGLLYGFLRRVTAPRVKQH</sequence>
<reference key="1">
    <citation type="submission" date="2004-02" db="EMBL/GenBank/DDBJ databases">
        <authorList>
            <consortium name="NIH - Zebrafish Gene Collection (ZGC) project"/>
        </authorList>
    </citation>
    <scope>NUCLEOTIDE SEQUENCE [LARGE SCALE MRNA] (ISOFORMS 1 AND 2)</scope>
    <source>
        <tissue>Embryo</tissue>
    </source>
</reference>
<reference key="2">
    <citation type="journal article" date="2004" name="EMBO J.">
        <title>Nicalin and its binding partner Nomo are novel Nodal signaling antagonists.</title>
        <authorList>
            <person name="Haffner C."/>
            <person name="Frauli M."/>
            <person name="Topp S."/>
            <person name="Irmler M."/>
            <person name="Hofmann K."/>
            <person name="Regula J.T."/>
            <person name="Bally-Cuif L."/>
            <person name="Haass C."/>
        </authorList>
    </citation>
    <scope>FUNCTION</scope>
    <scope>DEVELOPMENTAL STAGE</scope>
</reference>
<accession>Q6NZ07</accession>
<accession>Q6PHK1</accession>
<organism>
    <name type="scientific">Danio rerio</name>
    <name type="common">Zebrafish</name>
    <name type="synonym">Brachydanio rerio</name>
    <dbReference type="NCBI Taxonomy" id="7955"/>
    <lineage>
        <taxon>Eukaryota</taxon>
        <taxon>Metazoa</taxon>
        <taxon>Chordata</taxon>
        <taxon>Craniata</taxon>
        <taxon>Vertebrata</taxon>
        <taxon>Euteleostomi</taxon>
        <taxon>Actinopterygii</taxon>
        <taxon>Neopterygii</taxon>
        <taxon>Teleostei</taxon>
        <taxon>Ostariophysi</taxon>
        <taxon>Cypriniformes</taxon>
        <taxon>Danionidae</taxon>
        <taxon>Danioninae</taxon>
        <taxon>Danio</taxon>
    </lineage>
</organism>
<name>NCLN_DANRE</name>
<protein>
    <recommendedName>
        <fullName evidence="5">BOS complex subunit ncln</fullName>
    </recommendedName>
    <alternativeName>
        <fullName>Nicalin-1</fullName>
    </alternativeName>
    <alternativeName>
        <fullName>Nicastrin-like protein 1</fullName>
    </alternativeName>
</protein>
<evidence type="ECO:0000250" key="1">
    <source>
        <dbReference type="UniProtKB" id="A0A8I3NGV2"/>
    </source>
</evidence>
<evidence type="ECO:0000255" key="2"/>
<evidence type="ECO:0000269" key="3">
    <source>
    </source>
</evidence>
<evidence type="ECO:0000303" key="4">
    <source ref="1"/>
</evidence>
<evidence type="ECO:0000305" key="5"/>
<feature type="signal peptide" evidence="2">
    <location>
        <begin position="1"/>
        <end position="35"/>
    </location>
</feature>
<feature type="chain" id="PRO_0000019691" description="BOS complex subunit ncln">
    <location>
        <begin position="36"/>
        <end position="572"/>
    </location>
</feature>
<feature type="topological domain" description="Extracellular" evidence="2">
    <location>
        <begin position="36"/>
        <end position="530"/>
    </location>
</feature>
<feature type="transmembrane region" description="Helical" evidence="2">
    <location>
        <begin position="531"/>
        <end position="551"/>
    </location>
</feature>
<feature type="topological domain" description="Cytoplasmic" evidence="2">
    <location>
        <begin position="552"/>
        <end position="572"/>
    </location>
</feature>
<feature type="glycosylation site" description="N-linked (GlcNAc...) asparagine" evidence="2">
    <location>
        <position position="108"/>
    </location>
</feature>
<feature type="glycosylation site" description="N-linked (GlcNAc...) asparagine" evidence="2">
    <location>
        <position position="234"/>
    </location>
</feature>
<feature type="glycosylation site" description="N-linked (GlcNAc...) asparagine" evidence="2">
    <location>
        <position position="436"/>
    </location>
</feature>
<feature type="splice variant" id="VSP_013852" description="In isoform 2." evidence="4">
    <location>
        <position position="454"/>
    </location>
</feature>
<comment type="function">
    <text evidence="1 3">Component of the multi-pass translocon (MPT) complex that mediates insertion of multi-pass membrane proteins into the lipid bilayer of membranes. The MPT complex takes over after the SEC61 complex: following membrane insertion of the first few transmembrane segments of proteins by the SEC61 complex, the MPT complex occludes the lateral gate of the SEC61 complex to promote insertion of subsequent transmembrane regions (By similarity). Antagonizes Nodal signaling and subsequent organization of axial structures during mesodermal patterning. Ectopic expression results in cyclopia, due to a defect in mesendoderm patterning (PubMed:15257293).</text>
</comment>
<comment type="subunit">
    <text evidence="1">Component of the multi-pass translocon (MPT) complex.</text>
</comment>
<comment type="subcellular location">
    <subcellularLocation>
        <location evidence="1">Endoplasmic reticulum membrane</location>
        <topology evidence="2">Single-pass type I membrane protein</topology>
    </subcellularLocation>
</comment>
<comment type="alternative products">
    <event type="alternative splicing"/>
    <isoform>
        <id>Q6NZ07-1</id>
        <name>1</name>
        <sequence type="displayed"/>
    </isoform>
    <isoform>
        <id>Q6NZ07-2</id>
        <name>2</name>
        <sequence type="described" ref="VSP_013852"/>
    </isoform>
</comment>
<comment type="developmental stage">
    <text evidence="3">Strongly and ubiquitously expressed at early stage of somatogenesis. Later, expression is prominent in the developing retina, optic tectum and somites.</text>
</comment>
<comment type="similarity">
    <text evidence="5">Belongs to the nicastrin family.</text>
</comment>
<gene>
    <name type="primary">ncln</name>
    <name type="synonym">ncl1</name>
</gene>
<keyword id="KW-0025">Alternative splicing</keyword>
<keyword id="KW-0217">Developmental protein</keyword>
<keyword id="KW-0256">Endoplasmic reticulum</keyword>
<keyword id="KW-0325">Glycoprotein</keyword>
<keyword id="KW-0472">Membrane</keyword>
<keyword id="KW-1185">Reference proteome</keyword>
<keyword id="KW-0732">Signal</keyword>
<keyword id="KW-0812">Transmembrane</keyword>
<keyword id="KW-1133">Transmembrane helix</keyword>